<organism>
    <name type="scientific">Bos taurus</name>
    <name type="common">Bovine</name>
    <dbReference type="NCBI Taxonomy" id="9913"/>
    <lineage>
        <taxon>Eukaryota</taxon>
        <taxon>Metazoa</taxon>
        <taxon>Chordata</taxon>
        <taxon>Craniata</taxon>
        <taxon>Vertebrata</taxon>
        <taxon>Euteleostomi</taxon>
        <taxon>Mammalia</taxon>
        <taxon>Eutheria</taxon>
        <taxon>Laurasiatheria</taxon>
        <taxon>Artiodactyla</taxon>
        <taxon>Ruminantia</taxon>
        <taxon>Pecora</taxon>
        <taxon>Bovidae</taxon>
        <taxon>Bovinae</taxon>
        <taxon>Bos</taxon>
    </lineage>
</organism>
<keyword id="KW-0496">Mitochondrion</keyword>
<keyword id="KW-0539">Nucleus</keyword>
<keyword id="KW-1185">Reference proteome</keyword>
<keyword id="KW-0809">Transit peptide</keyword>
<accession>Q0VCG0</accession>
<protein>
    <recommendedName>
        <fullName evidence="3">LYR motif-containing protein 4</fullName>
    </recommendedName>
</protein>
<reference key="1">
    <citation type="submission" date="2006-08" db="EMBL/GenBank/DDBJ databases">
        <authorList>
            <consortium name="NIH - Mammalian Gene Collection (MGC) project"/>
        </authorList>
    </citation>
    <scope>NUCLEOTIDE SEQUENCE [LARGE SCALE MRNA]</scope>
    <source>
        <strain>Hereford</strain>
        <tissue>Fetal lung</tissue>
    </source>
</reference>
<dbReference type="EMBL" id="BC120188">
    <property type="protein sequence ID" value="AAI20189.1"/>
    <property type="molecule type" value="mRNA"/>
</dbReference>
<dbReference type="RefSeq" id="NP_001069774.1">
    <property type="nucleotide sequence ID" value="NM_001076306.1"/>
</dbReference>
<dbReference type="SMR" id="Q0VCG0"/>
<dbReference type="FunCoup" id="Q0VCG0">
    <property type="interactions" value="3200"/>
</dbReference>
<dbReference type="STRING" id="9913.ENSBTAP00000042040"/>
<dbReference type="PaxDb" id="9913-ENSBTAP00000042040"/>
<dbReference type="Ensembl" id="ENSBTAT00000044551.3">
    <property type="protein sequence ID" value="ENSBTAP00000042040.2"/>
    <property type="gene ID" value="ENSBTAG00000031432.4"/>
</dbReference>
<dbReference type="GeneID" id="614011"/>
<dbReference type="KEGG" id="bta:614011"/>
<dbReference type="CTD" id="57128"/>
<dbReference type="VEuPathDB" id="HostDB:ENSBTAG00000031432"/>
<dbReference type="VGNC" id="VGNC:31110">
    <property type="gene designation" value="LYRM4"/>
</dbReference>
<dbReference type="eggNOG" id="KOG3801">
    <property type="taxonomic scope" value="Eukaryota"/>
</dbReference>
<dbReference type="GeneTree" id="ENSGT00940000157289"/>
<dbReference type="HOGENOM" id="CLU_120076_3_1_1"/>
<dbReference type="InParanoid" id="Q0VCG0"/>
<dbReference type="OMA" id="YTTDKLV"/>
<dbReference type="OrthoDB" id="275715at2759"/>
<dbReference type="TreeFam" id="TF323581"/>
<dbReference type="Reactome" id="R-BTA-1362409">
    <property type="pathway name" value="Mitochondrial iron-sulfur cluster biogenesis"/>
</dbReference>
<dbReference type="Reactome" id="R-BTA-9854311">
    <property type="pathway name" value="Maturation of TCA enzymes and regulation of TCA cycle"/>
</dbReference>
<dbReference type="Reactome" id="R-BTA-9865881">
    <property type="pathway name" value="Complex III assembly"/>
</dbReference>
<dbReference type="UniPathway" id="UPA00266"/>
<dbReference type="Proteomes" id="UP000009136">
    <property type="component" value="Chromosome 23"/>
</dbReference>
<dbReference type="Bgee" id="ENSBTAG00000031432">
    <property type="expression patterns" value="Expressed in spermatid and 105 other cell types or tissues"/>
</dbReference>
<dbReference type="GO" id="GO:1990221">
    <property type="term" value="C:L-cysteine desulfurase complex"/>
    <property type="evidence" value="ECO:0000318"/>
    <property type="project" value="GO_Central"/>
</dbReference>
<dbReference type="GO" id="GO:0099128">
    <property type="term" value="C:mitochondrial [2Fe-2S] assembly complex"/>
    <property type="evidence" value="ECO:0000250"/>
    <property type="project" value="UniProtKB"/>
</dbReference>
<dbReference type="GO" id="GO:0005739">
    <property type="term" value="C:mitochondrion"/>
    <property type="evidence" value="ECO:0000250"/>
    <property type="project" value="UniProtKB"/>
</dbReference>
<dbReference type="GO" id="GO:0016604">
    <property type="term" value="C:nuclear body"/>
    <property type="evidence" value="ECO:0007669"/>
    <property type="project" value="Ensembl"/>
</dbReference>
<dbReference type="GO" id="GO:0042803">
    <property type="term" value="F:protein homodimerization activity"/>
    <property type="evidence" value="ECO:0000314"/>
    <property type="project" value="UniProtKB"/>
</dbReference>
<dbReference type="GO" id="GO:0005198">
    <property type="term" value="F:structural molecule activity"/>
    <property type="evidence" value="ECO:0007669"/>
    <property type="project" value="Ensembl"/>
</dbReference>
<dbReference type="GO" id="GO:0044571">
    <property type="term" value="P:[2Fe-2S] cluster assembly"/>
    <property type="evidence" value="ECO:0000250"/>
    <property type="project" value="UniProtKB"/>
</dbReference>
<dbReference type="GO" id="GO:0044572">
    <property type="term" value="P:[4Fe-4S] cluster assembly"/>
    <property type="evidence" value="ECO:0000250"/>
    <property type="project" value="UniProtKB"/>
</dbReference>
<dbReference type="GO" id="GO:0016226">
    <property type="term" value="P:iron-sulfur cluster assembly"/>
    <property type="evidence" value="ECO:0000318"/>
    <property type="project" value="GO_Central"/>
</dbReference>
<dbReference type="CDD" id="cd20264">
    <property type="entry name" value="Complex1_LYR_LYRM4"/>
    <property type="match status" value="1"/>
</dbReference>
<dbReference type="InterPro" id="IPR008011">
    <property type="entry name" value="Complex1_LYR_dom"/>
</dbReference>
<dbReference type="InterPro" id="IPR045297">
    <property type="entry name" value="Complex1_LYR_LYRM4"/>
</dbReference>
<dbReference type="InterPro" id="IPR051522">
    <property type="entry name" value="ISC_assembly_LYR"/>
</dbReference>
<dbReference type="PANTHER" id="PTHR13166:SF7">
    <property type="entry name" value="LYR MOTIF-CONTAINING PROTEIN 4"/>
    <property type="match status" value="1"/>
</dbReference>
<dbReference type="PANTHER" id="PTHR13166">
    <property type="entry name" value="PROTEIN C6ORF149"/>
    <property type="match status" value="1"/>
</dbReference>
<dbReference type="Pfam" id="PF05347">
    <property type="entry name" value="Complex1_LYR"/>
    <property type="match status" value="1"/>
</dbReference>
<feature type="chain" id="PRO_0000313021" description="LYR motif-containing protein 4">
    <location>
        <begin position="1"/>
        <end position="91"/>
    </location>
</feature>
<feature type="binding site" evidence="3">
    <location>
        <position position="6"/>
    </location>
    <ligand>
        <name>pantetheine 4'-phosphate</name>
        <dbReference type="ChEBI" id="CHEBI:47942"/>
        <note>ligand shared with NDUFAB1</note>
    </ligand>
</feature>
<feature type="binding site" evidence="3">
    <location>
        <position position="44"/>
    </location>
    <ligand>
        <name>pantetheine 4'-phosphate</name>
        <dbReference type="ChEBI" id="CHEBI:47942"/>
        <note>ligand shared with NDUFAB1</note>
    </ligand>
</feature>
<feature type="modified residue" description="N6-succinyllysine" evidence="1">
    <location>
        <position position="47"/>
    </location>
</feature>
<name>LYRM4_BOVIN</name>
<sequence length="91" mass="10711">MAASSRAQVLDLYRAMLRESKRFGAYNYRTYAIRRIRDAFRENKNVKDPVEIQALVNKAKRDLGIIRRQVHIGQMYSTDKLVIENQEKPRA</sequence>
<gene>
    <name evidence="3" type="primary">LYRM4</name>
    <name type="synonym">ISD11</name>
</gene>
<evidence type="ECO:0000250" key="1">
    <source>
        <dbReference type="UniProtKB" id="Q8K215"/>
    </source>
</evidence>
<evidence type="ECO:0000250" key="2">
    <source>
        <dbReference type="UniProtKB" id="Q9H1K1"/>
    </source>
</evidence>
<evidence type="ECO:0000250" key="3">
    <source>
        <dbReference type="UniProtKB" id="Q9HD34"/>
    </source>
</evidence>
<evidence type="ECO:0000305" key="4"/>
<comment type="function">
    <text evidence="2 3">Stabilizing factor, of the core iron-sulfur cluster (ISC) assembly complex, that regulates, in association with NDUFAB1, the stability and the cysteine desulfurase activity of NFS1 and participates in the [2Fe-2S] clusters assembly on the scaffolding protein ISCU (By similarity). The core iron-sulfur cluster (ISC) assembly complex is involved in the de novo synthesis of a [2Fe-2S] cluster, the first step of the mitochondrial iron-sulfur protein biogenesis. This process is initiated by the cysteine desulfurase complex (NFS1:LYRM4:NDUFAB1) that produces persulfide which is delivered on the scaffold protein ISCU in a FXN-dependent manner. Then this complex is stabilized by FDX2 which provides reducing equivalents to accomplish the [2Fe-2S] cluster assembly. Finally, the [2Fe-2S] cluster is transferred from ISCU to chaperone proteins, including HSCB, HSPA9 and GLRX5 (By similarity). May also participates in the iron-sulfur protein biogenesis in the cytoplasm through its interaction with the cytoplasmic form of NFS1 (By similarity).</text>
</comment>
<comment type="pathway">
    <text evidence="3">Cofactor biosynthesis; iron-sulfur cluster biosynthesis.</text>
</comment>
<comment type="subunit">
    <text evidence="3">Homodimer. Component of the mitochondrial core iron-sulfur cluster (ISC) complex composed of NFS1, LYRM4, NDUFAB1, ISCU, FXN, and FDX2; this complex is a heterohexamer containing two copies of each monomer. Component of the cyteine desulfurase complex composed of NFS1, LYRM4 and NDUFAB1; this complex contributes to the stability and cysteine desulfurase activity of NFS1. Interacts with FXN; this interaction is nickel-dependent. Interacts with the cytoplasmic form of NFS1; the complex increases the stability of NFS1. Forms a complex with the cytoplasmic form of NFS1; this complex increases the stability and cysteine desulfurase activity of NFS1. Interacts with NFS1.</text>
</comment>
<comment type="subcellular location">
    <subcellularLocation>
        <location evidence="3">Mitochondrion</location>
    </subcellularLocation>
    <subcellularLocation>
        <location evidence="3">Nucleus</location>
    </subcellularLocation>
</comment>
<comment type="similarity">
    <text evidence="4">Belongs to the complex I LYR family.</text>
</comment>
<proteinExistence type="inferred from homology"/>